<reference key="1">
    <citation type="journal article" date="2007" name="PLoS Biol.">
        <title>Evolution of symbiotic bacteria in the distal human intestine.</title>
        <authorList>
            <person name="Xu J."/>
            <person name="Mahowald M.A."/>
            <person name="Ley R.E."/>
            <person name="Lozupone C.A."/>
            <person name="Hamady M."/>
            <person name="Martens E.C."/>
            <person name="Henrissat B."/>
            <person name="Coutinho P.M."/>
            <person name="Minx P."/>
            <person name="Latreille P."/>
            <person name="Cordum H."/>
            <person name="Van Brunt A."/>
            <person name="Kim K."/>
            <person name="Fulton R.S."/>
            <person name="Fulton L.A."/>
            <person name="Clifton S.W."/>
            <person name="Wilson R.K."/>
            <person name="Knight R.D."/>
            <person name="Gordon J.I."/>
        </authorList>
    </citation>
    <scope>NUCLEOTIDE SEQUENCE [LARGE SCALE GENOMIC DNA]</scope>
    <source>
        <strain>ATCC 8482 / DSM 1447 / JCM 5826 / CCUG 4940 / NBRC 14291 / NCTC 11154</strain>
    </source>
</reference>
<proteinExistence type="inferred from homology"/>
<accession>A6L070</accession>
<sequence>MDVNTLKSVYFIGAGGIGMSALVRYFLSKGKKVGGYDRTPSELTEKLIEEGAAIHYEESTELITDAFRDPATTLVVYTPAVPDTHKEFTYFRENGFEIHKRSQVLGMLTHAGKGLCVAGTHGKTTTSTMTAHLLHQSHVGCNAFLGGISKNYGTNLLLSDSSEYMVIEADEFDRSFHWLSPYISVITATDPDHLDIYGTKEAYLESFRKYTSLIQPGGALIVRKGIELQPALQNGVKLYTYSQEEGDFHAENIRIGNGEIFFDYVSPLGNIPNIQLGVPVSINIENGVAAMALAQMSGLTDEEIKRGMASFRGVDRRFDFKIKNDKVVFLSDYAHHPSEIKQSILSMRALYRDKKLTAVFQPHLYTRTRDFYKDFADSLSLLDEVILVDIYPAREQPIPGVTSKLIYDHLRPGIEKSMCKKEEILDVLSKKDIEVLITLGAGDIDNYVPQICGLLNKK</sequence>
<keyword id="KW-0067">ATP-binding</keyword>
<keyword id="KW-0131">Cell cycle</keyword>
<keyword id="KW-0132">Cell division</keyword>
<keyword id="KW-0133">Cell shape</keyword>
<keyword id="KW-0961">Cell wall biogenesis/degradation</keyword>
<keyword id="KW-0963">Cytoplasm</keyword>
<keyword id="KW-0436">Ligase</keyword>
<keyword id="KW-0547">Nucleotide-binding</keyword>
<keyword id="KW-0573">Peptidoglycan synthesis</keyword>
<dbReference type="EC" id="6.3.2.8" evidence="1"/>
<dbReference type="EMBL" id="CP000139">
    <property type="protein sequence ID" value="ABR39084.1"/>
    <property type="molecule type" value="Genomic_DNA"/>
</dbReference>
<dbReference type="RefSeq" id="WP_005845309.1">
    <property type="nucleotide sequence ID" value="NZ_JANSWM010000067.1"/>
</dbReference>
<dbReference type="SMR" id="A6L070"/>
<dbReference type="STRING" id="435590.BVU_1396"/>
<dbReference type="PaxDb" id="435590-BVU_1396"/>
<dbReference type="GeneID" id="5302362"/>
<dbReference type="KEGG" id="bvu:BVU_1396"/>
<dbReference type="eggNOG" id="COG0773">
    <property type="taxonomic scope" value="Bacteria"/>
</dbReference>
<dbReference type="HOGENOM" id="CLU_028104_2_2_10"/>
<dbReference type="BioCyc" id="BVUL435590:G1G59-1459-MONOMER"/>
<dbReference type="UniPathway" id="UPA00219"/>
<dbReference type="Proteomes" id="UP000002861">
    <property type="component" value="Chromosome"/>
</dbReference>
<dbReference type="GO" id="GO:0005737">
    <property type="term" value="C:cytoplasm"/>
    <property type="evidence" value="ECO:0007669"/>
    <property type="project" value="UniProtKB-SubCell"/>
</dbReference>
<dbReference type="GO" id="GO:0005524">
    <property type="term" value="F:ATP binding"/>
    <property type="evidence" value="ECO:0007669"/>
    <property type="project" value="UniProtKB-UniRule"/>
</dbReference>
<dbReference type="GO" id="GO:0008763">
    <property type="term" value="F:UDP-N-acetylmuramate-L-alanine ligase activity"/>
    <property type="evidence" value="ECO:0007669"/>
    <property type="project" value="UniProtKB-UniRule"/>
</dbReference>
<dbReference type="GO" id="GO:0051301">
    <property type="term" value="P:cell division"/>
    <property type="evidence" value="ECO:0007669"/>
    <property type="project" value="UniProtKB-KW"/>
</dbReference>
<dbReference type="GO" id="GO:0071555">
    <property type="term" value="P:cell wall organization"/>
    <property type="evidence" value="ECO:0007669"/>
    <property type="project" value="UniProtKB-KW"/>
</dbReference>
<dbReference type="GO" id="GO:0009252">
    <property type="term" value="P:peptidoglycan biosynthetic process"/>
    <property type="evidence" value="ECO:0007669"/>
    <property type="project" value="UniProtKB-UniRule"/>
</dbReference>
<dbReference type="GO" id="GO:0008360">
    <property type="term" value="P:regulation of cell shape"/>
    <property type="evidence" value="ECO:0007669"/>
    <property type="project" value="UniProtKB-KW"/>
</dbReference>
<dbReference type="Gene3D" id="3.90.190.20">
    <property type="entry name" value="Mur ligase, C-terminal domain"/>
    <property type="match status" value="1"/>
</dbReference>
<dbReference type="Gene3D" id="3.40.1190.10">
    <property type="entry name" value="Mur-like, catalytic domain"/>
    <property type="match status" value="1"/>
</dbReference>
<dbReference type="Gene3D" id="3.40.50.720">
    <property type="entry name" value="NAD(P)-binding Rossmann-like Domain"/>
    <property type="match status" value="1"/>
</dbReference>
<dbReference type="HAMAP" id="MF_00046">
    <property type="entry name" value="MurC"/>
    <property type="match status" value="1"/>
</dbReference>
<dbReference type="InterPro" id="IPR036565">
    <property type="entry name" value="Mur-like_cat_sf"/>
</dbReference>
<dbReference type="InterPro" id="IPR004101">
    <property type="entry name" value="Mur_ligase_C"/>
</dbReference>
<dbReference type="InterPro" id="IPR036615">
    <property type="entry name" value="Mur_ligase_C_dom_sf"/>
</dbReference>
<dbReference type="InterPro" id="IPR013221">
    <property type="entry name" value="Mur_ligase_cen"/>
</dbReference>
<dbReference type="InterPro" id="IPR000713">
    <property type="entry name" value="Mur_ligase_N"/>
</dbReference>
<dbReference type="InterPro" id="IPR050061">
    <property type="entry name" value="MurCDEF_pg_biosynth"/>
</dbReference>
<dbReference type="InterPro" id="IPR005758">
    <property type="entry name" value="UDP-N-AcMur_Ala_ligase_MurC"/>
</dbReference>
<dbReference type="NCBIfam" id="TIGR01082">
    <property type="entry name" value="murC"/>
    <property type="match status" value="1"/>
</dbReference>
<dbReference type="PANTHER" id="PTHR43445:SF3">
    <property type="entry name" value="UDP-N-ACETYLMURAMATE--L-ALANINE LIGASE"/>
    <property type="match status" value="1"/>
</dbReference>
<dbReference type="PANTHER" id="PTHR43445">
    <property type="entry name" value="UDP-N-ACETYLMURAMATE--L-ALANINE LIGASE-RELATED"/>
    <property type="match status" value="1"/>
</dbReference>
<dbReference type="Pfam" id="PF01225">
    <property type="entry name" value="Mur_ligase"/>
    <property type="match status" value="1"/>
</dbReference>
<dbReference type="Pfam" id="PF02875">
    <property type="entry name" value="Mur_ligase_C"/>
    <property type="match status" value="1"/>
</dbReference>
<dbReference type="Pfam" id="PF08245">
    <property type="entry name" value="Mur_ligase_M"/>
    <property type="match status" value="1"/>
</dbReference>
<dbReference type="SUPFAM" id="SSF51984">
    <property type="entry name" value="MurCD N-terminal domain"/>
    <property type="match status" value="1"/>
</dbReference>
<dbReference type="SUPFAM" id="SSF53623">
    <property type="entry name" value="MurD-like peptide ligases, catalytic domain"/>
    <property type="match status" value="1"/>
</dbReference>
<dbReference type="SUPFAM" id="SSF53244">
    <property type="entry name" value="MurD-like peptide ligases, peptide-binding domain"/>
    <property type="match status" value="1"/>
</dbReference>
<evidence type="ECO:0000255" key="1">
    <source>
        <dbReference type="HAMAP-Rule" id="MF_00046"/>
    </source>
</evidence>
<comment type="function">
    <text evidence="1">Cell wall formation.</text>
</comment>
<comment type="catalytic activity">
    <reaction evidence="1">
        <text>UDP-N-acetyl-alpha-D-muramate + L-alanine + ATP = UDP-N-acetyl-alpha-D-muramoyl-L-alanine + ADP + phosphate + H(+)</text>
        <dbReference type="Rhea" id="RHEA:23372"/>
        <dbReference type="ChEBI" id="CHEBI:15378"/>
        <dbReference type="ChEBI" id="CHEBI:30616"/>
        <dbReference type="ChEBI" id="CHEBI:43474"/>
        <dbReference type="ChEBI" id="CHEBI:57972"/>
        <dbReference type="ChEBI" id="CHEBI:70757"/>
        <dbReference type="ChEBI" id="CHEBI:83898"/>
        <dbReference type="ChEBI" id="CHEBI:456216"/>
        <dbReference type="EC" id="6.3.2.8"/>
    </reaction>
</comment>
<comment type="pathway">
    <text evidence="1">Cell wall biogenesis; peptidoglycan biosynthesis.</text>
</comment>
<comment type="subcellular location">
    <subcellularLocation>
        <location evidence="1">Cytoplasm</location>
    </subcellularLocation>
</comment>
<comment type="similarity">
    <text evidence="1">Belongs to the MurCDEF family.</text>
</comment>
<feature type="chain" id="PRO_0000336814" description="UDP-N-acetylmuramate--L-alanine ligase">
    <location>
        <begin position="1"/>
        <end position="458"/>
    </location>
</feature>
<feature type="binding site" evidence="1">
    <location>
        <begin position="119"/>
        <end position="125"/>
    </location>
    <ligand>
        <name>ATP</name>
        <dbReference type="ChEBI" id="CHEBI:30616"/>
    </ligand>
</feature>
<protein>
    <recommendedName>
        <fullName evidence="1">UDP-N-acetylmuramate--L-alanine ligase</fullName>
        <ecNumber evidence="1">6.3.2.8</ecNumber>
    </recommendedName>
    <alternativeName>
        <fullName evidence="1">UDP-N-acetylmuramoyl-L-alanine synthetase</fullName>
    </alternativeName>
</protein>
<gene>
    <name evidence="1" type="primary">murC</name>
    <name type="ordered locus">BVU_1396</name>
</gene>
<organism>
    <name type="scientific">Phocaeicola vulgatus (strain ATCC 8482 / DSM 1447 / JCM 5826 / CCUG 4940 / NBRC 14291 / NCTC 11154)</name>
    <name type="common">Bacteroides vulgatus</name>
    <dbReference type="NCBI Taxonomy" id="435590"/>
    <lineage>
        <taxon>Bacteria</taxon>
        <taxon>Pseudomonadati</taxon>
        <taxon>Bacteroidota</taxon>
        <taxon>Bacteroidia</taxon>
        <taxon>Bacteroidales</taxon>
        <taxon>Bacteroidaceae</taxon>
        <taxon>Phocaeicola</taxon>
    </lineage>
</organism>
<name>MURC_PHOV8</name>